<protein>
    <recommendedName>
        <fullName>CBL-interacting protein kinase 16</fullName>
        <ecNumber>2.7.11.1</ecNumber>
    </recommendedName>
    <alternativeName>
        <fullName>OsCIPK16</fullName>
    </alternativeName>
</protein>
<dbReference type="EC" id="2.7.11.1"/>
<dbReference type="EMBL" id="AP005429">
    <property type="protein sequence ID" value="BAD28646.1"/>
    <property type="molecule type" value="Genomic_DNA"/>
</dbReference>
<dbReference type="EMBL" id="AP008215">
    <property type="protein sequence ID" value="BAF25100.1"/>
    <property type="status" value="ALT_SEQ"/>
    <property type="molecule type" value="Genomic_DNA"/>
</dbReference>
<dbReference type="EMBL" id="AP014965">
    <property type="protein sequence ID" value="BAT08103.1"/>
    <property type="molecule type" value="Genomic_DNA"/>
</dbReference>
<dbReference type="EMBL" id="AK061220">
    <property type="protein sequence ID" value="BAG87801.1"/>
    <property type="molecule type" value="mRNA"/>
</dbReference>
<dbReference type="EMBL" id="AK061493">
    <property type="protein sequence ID" value="BAG87965.1"/>
    <property type="molecule type" value="mRNA"/>
</dbReference>
<dbReference type="EMBL" id="AK100881">
    <property type="protein sequence ID" value="BAG94809.1"/>
    <property type="molecule type" value="mRNA"/>
</dbReference>
<dbReference type="RefSeq" id="XP_015651262.1">
    <property type="nucleotide sequence ID" value="XM_015795776.1"/>
</dbReference>
<dbReference type="SMR" id="Q6ERS4"/>
<dbReference type="FunCoup" id="Q6ERS4">
    <property type="interactions" value="492"/>
</dbReference>
<dbReference type="STRING" id="39947.Q6ERS4"/>
<dbReference type="PaxDb" id="39947-Q6ERS4"/>
<dbReference type="EnsemblPlants" id="Os09t0418000-01">
    <property type="protein sequence ID" value="Os09t0418000-01"/>
    <property type="gene ID" value="Os09g0418000"/>
</dbReference>
<dbReference type="EnsemblPlants" id="Os09t0418000-03">
    <property type="protein sequence ID" value="Os09t0418000-03"/>
    <property type="gene ID" value="Os09g0418000"/>
</dbReference>
<dbReference type="Gramene" id="Os09t0418000-01">
    <property type="protein sequence ID" value="Os09t0418000-01"/>
    <property type="gene ID" value="Os09g0418000"/>
</dbReference>
<dbReference type="Gramene" id="Os09t0418000-03">
    <property type="protein sequence ID" value="Os09t0418000-03"/>
    <property type="gene ID" value="Os09g0418000"/>
</dbReference>
<dbReference type="KEGG" id="dosa:Os09g0418000"/>
<dbReference type="eggNOG" id="KOG0583">
    <property type="taxonomic scope" value="Eukaryota"/>
</dbReference>
<dbReference type="HOGENOM" id="CLU_000288_59_0_1"/>
<dbReference type="InParanoid" id="Q6ERS4"/>
<dbReference type="OMA" id="AEFECPP"/>
<dbReference type="OrthoDB" id="193931at2759"/>
<dbReference type="Proteomes" id="UP000000763">
    <property type="component" value="Chromosome 9"/>
</dbReference>
<dbReference type="Proteomes" id="UP000059680">
    <property type="component" value="Chromosome 9"/>
</dbReference>
<dbReference type="ExpressionAtlas" id="Q6ERS4">
    <property type="expression patterns" value="baseline and differential"/>
</dbReference>
<dbReference type="GO" id="GO:0005524">
    <property type="term" value="F:ATP binding"/>
    <property type="evidence" value="ECO:0007669"/>
    <property type="project" value="UniProtKB-KW"/>
</dbReference>
<dbReference type="GO" id="GO:0106310">
    <property type="term" value="F:protein serine kinase activity"/>
    <property type="evidence" value="ECO:0007669"/>
    <property type="project" value="RHEA"/>
</dbReference>
<dbReference type="GO" id="GO:0004674">
    <property type="term" value="F:protein serine/threonine kinase activity"/>
    <property type="evidence" value="ECO:0000318"/>
    <property type="project" value="GO_Central"/>
</dbReference>
<dbReference type="GO" id="GO:0007165">
    <property type="term" value="P:signal transduction"/>
    <property type="evidence" value="ECO:0000318"/>
    <property type="project" value="GO_Central"/>
</dbReference>
<dbReference type="CDD" id="cd12195">
    <property type="entry name" value="CIPK_C"/>
    <property type="match status" value="1"/>
</dbReference>
<dbReference type="FunFam" id="1.10.510.10:FF:000279">
    <property type="entry name" value="Non-specific serine/threonine protein kinase"/>
    <property type="match status" value="1"/>
</dbReference>
<dbReference type="FunFam" id="3.30.200.20:FF:000096">
    <property type="entry name" value="Non-specific serine/threonine protein kinase"/>
    <property type="match status" value="1"/>
</dbReference>
<dbReference type="FunFam" id="3.30.310.80:FF:000005">
    <property type="entry name" value="Non-specific serine/threonine protein kinase"/>
    <property type="match status" value="1"/>
</dbReference>
<dbReference type="Gene3D" id="3.30.310.80">
    <property type="entry name" value="Kinase associated domain 1, KA1"/>
    <property type="match status" value="1"/>
</dbReference>
<dbReference type="Gene3D" id="1.10.510.10">
    <property type="entry name" value="Transferase(Phosphotransferase) domain 1"/>
    <property type="match status" value="1"/>
</dbReference>
<dbReference type="InterPro" id="IPR011009">
    <property type="entry name" value="Kinase-like_dom_sf"/>
</dbReference>
<dbReference type="InterPro" id="IPR018451">
    <property type="entry name" value="NAF/FISL_domain"/>
</dbReference>
<dbReference type="InterPro" id="IPR004041">
    <property type="entry name" value="NAF_dom"/>
</dbReference>
<dbReference type="InterPro" id="IPR000719">
    <property type="entry name" value="Prot_kinase_dom"/>
</dbReference>
<dbReference type="InterPro" id="IPR017441">
    <property type="entry name" value="Protein_kinase_ATP_BS"/>
</dbReference>
<dbReference type="InterPro" id="IPR008271">
    <property type="entry name" value="Ser/Thr_kinase_AS"/>
</dbReference>
<dbReference type="PANTHER" id="PTHR43895">
    <property type="entry name" value="CALCIUM/CALMODULIN-DEPENDENT PROTEIN KINASE KINASE-RELATED"/>
    <property type="match status" value="1"/>
</dbReference>
<dbReference type="PANTHER" id="PTHR43895:SF162">
    <property type="entry name" value="CBL-INTERACTING SERINE_THREONINE-PROTEIN KINASE 25"/>
    <property type="match status" value="1"/>
</dbReference>
<dbReference type="Pfam" id="PF03822">
    <property type="entry name" value="NAF"/>
    <property type="match status" value="1"/>
</dbReference>
<dbReference type="Pfam" id="PF00069">
    <property type="entry name" value="Pkinase"/>
    <property type="match status" value="1"/>
</dbReference>
<dbReference type="SMART" id="SM00220">
    <property type="entry name" value="S_TKc"/>
    <property type="match status" value="1"/>
</dbReference>
<dbReference type="SUPFAM" id="SSF56112">
    <property type="entry name" value="Protein kinase-like (PK-like)"/>
    <property type="match status" value="1"/>
</dbReference>
<dbReference type="PROSITE" id="PS50816">
    <property type="entry name" value="NAF"/>
    <property type="match status" value="1"/>
</dbReference>
<dbReference type="PROSITE" id="PS00107">
    <property type="entry name" value="PROTEIN_KINASE_ATP"/>
    <property type="match status" value="1"/>
</dbReference>
<dbReference type="PROSITE" id="PS50011">
    <property type="entry name" value="PROTEIN_KINASE_DOM"/>
    <property type="match status" value="1"/>
</dbReference>
<dbReference type="PROSITE" id="PS00108">
    <property type="entry name" value="PROTEIN_KINASE_ST"/>
    <property type="match status" value="1"/>
</dbReference>
<evidence type="ECO:0000250" key="1"/>
<evidence type="ECO:0000255" key="2">
    <source>
        <dbReference type="PROSITE-ProRule" id="PRU00159"/>
    </source>
</evidence>
<evidence type="ECO:0000255" key="3">
    <source>
        <dbReference type="PROSITE-ProRule" id="PRU00256"/>
    </source>
</evidence>
<evidence type="ECO:0000255" key="4">
    <source>
        <dbReference type="PROSITE-ProRule" id="PRU10027"/>
    </source>
</evidence>
<evidence type="ECO:0000269" key="5">
    <source>
    </source>
</evidence>
<evidence type="ECO:0000305" key="6"/>
<comment type="function">
    <text evidence="1">CIPK serine-threonine protein kinases interact with CBL proteins. Binding of a CBL protein to the regulatory NAF domain of CIPK protein lead to the activation of the kinase in a calcium-dependent manner (By similarity).</text>
</comment>
<comment type="catalytic activity">
    <reaction>
        <text>L-seryl-[protein] + ATP = O-phospho-L-seryl-[protein] + ADP + H(+)</text>
        <dbReference type="Rhea" id="RHEA:17989"/>
        <dbReference type="Rhea" id="RHEA-COMP:9863"/>
        <dbReference type="Rhea" id="RHEA-COMP:11604"/>
        <dbReference type="ChEBI" id="CHEBI:15378"/>
        <dbReference type="ChEBI" id="CHEBI:29999"/>
        <dbReference type="ChEBI" id="CHEBI:30616"/>
        <dbReference type="ChEBI" id="CHEBI:83421"/>
        <dbReference type="ChEBI" id="CHEBI:456216"/>
        <dbReference type="EC" id="2.7.11.1"/>
    </reaction>
</comment>
<comment type="catalytic activity">
    <reaction>
        <text>L-threonyl-[protein] + ATP = O-phospho-L-threonyl-[protein] + ADP + H(+)</text>
        <dbReference type="Rhea" id="RHEA:46608"/>
        <dbReference type="Rhea" id="RHEA-COMP:11060"/>
        <dbReference type="Rhea" id="RHEA-COMP:11605"/>
        <dbReference type="ChEBI" id="CHEBI:15378"/>
        <dbReference type="ChEBI" id="CHEBI:30013"/>
        <dbReference type="ChEBI" id="CHEBI:30616"/>
        <dbReference type="ChEBI" id="CHEBI:61977"/>
        <dbReference type="ChEBI" id="CHEBI:456216"/>
        <dbReference type="EC" id="2.7.11.1"/>
    </reaction>
</comment>
<comment type="cofactor">
    <cofactor evidence="1">
        <name>Mn(2+)</name>
        <dbReference type="ChEBI" id="CHEBI:29035"/>
    </cofactor>
</comment>
<comment type="induction">
    <text evidence="5">By salt stress and abscisic acid (ABA).</text>
</comment>
<comment type="domain">
    <text evidence="1">The activation loop within the kinase domain is the target of phosphorylation/activation by upstream protein kinases. The PPI motif mediates the interaction with the ABI (abscisic acid-insensitive) phosphatases (By similarity).</text>
</comment>
<comment type="similarity">
    <text evidence="6">Belongs to the protein kinase superfamily. CAMK Ser/Thr protein kinase family. SNF1 subfamily.</text>
</comment>
<comment type="sequence caution" evidence="6">
    <conflict type="erroneous gene model prediction">
        <sequence resource="EMBL-CDS" id="BAF25100"/>
    </conflict>
</comment>
<gene>
    <name type="primary">CIPK16</name>
    <name type="ordered locus">Os09g0418000</name>
    <name type="ordered locus">LOC_Os09g25090</name>
    <name type="ORF">P0701F11.5-1</name>
</gene>
<reference key="1">
    <citation type="journal article" date="2005" name="Nature">
        <title>The map-based sequence of the rice genome.</title>
        <authorList>
            <consortium name="International rice genome sequencing project (IRGSP)"/>
        </authorList>
    </citation>
    <scope>NUCLEOTIDE SEQUENCE [LARGE SCALE GENOMIC DNA]</scope>
    <source>
        <strain>cv. Nipponbare</strain>
    </source>
</reference>
<reference key="2">
    <citation type="journal article" date="2008" name="Nucleic Acids Res.">
        <title>The rice annotation project database (RAP-DB): 2008 update.</title>
        <authorList>
            <consortium name="The rice annotation project (RAP)"/>
        </authorList>
    </citation>
    <scope>GENOME REANNOTATION</scope>
    <source>
        <strain>cv. Nipponbare</strain>
    </source>
</reference>
<reference key="3">
    <citation type="journal article" date="2013" name="Rice">
        <title>Improvement of the Oryza sativa Nipponbare reference genome using next generation sequence and optical map data.</title>
        <authorList>
            <person name="Kawahara Y."/>
            <person name="de la Bastide M."/>
            <person name="Hamilton J.P."/>
            <person name="Kanamori H."/>
            <person name="McCombie W.R."/>
            <person name="Ouyang S."/>
            <person name="Schwartz D.C."/>
            <person name="Tanaka T."/>
            <person name="Wu J."/>
            <person name="Zhou S."/>
            <person name="Childs K.L."/>
            <person name="Davidson R.M."/>
            <person name="Lin H."/>
            <person name="Quesada-Ocampo L."/>
            <person name="Vaillancourt B."/>
            <person name="Sakai H."/>
            <person name="Lee S.S."/>
            <person name="Kim J."/>
            <person name="Numa H."/>
            <person name="Itoh T."/>
            <person name="Buell C.R."/>
            <person name="Matsumoto T."/>
        </authorList>
    </citation>
    <scope>GENOME REANNOTATION</scope>
    <source>
        <strain>cv. Nipponbare</strain>
    </source>
</reference>
<reference key="4">
    <citation type="journal article" date="2003" name="Science">
        <title>Collection, mapping, and annotation of over 28,000 cDNA clones from japonica rice.</title>
        <authorList>
            <consortium name="The rice full-length cDNA consortium"/>
        </authorList>
    </citation>
    <scope>NUCLEOTIDE SEQUENCE [LARGE SCALE MRNA]</scope>
    <source>
        <strain>cv. Nipponbare</strain>
    </source>
</reference>
<reference key="5">
    <citation type="journal article" date="2004" name="Plant Physiol.">
        <title>Calcium sensors and their interacting protein kinases: genomics of the Arabidopsis and rice CBL-CIPK signaling networks.</title>
        <authorList>
            <person name="Kolukisaoglu U."/>
            <person name="Weinl S."/>
            <person name="Blazevic D."/>
            <person name="Batistic O."/>
            <person name="Kudla J."/>
        </authorList>
    </citation>
    <scope>GENE FAMILY</scope>
    <scope>NOMENCLATURE</scope>
</reference>
<reference key="6">
    <citation type="journal article" date="2007" name="Plant Physiol.">
        <title>Characterization of stress-responsive CIPK genes in rice for stress tolerance improvement.</title>
        <authorList>
            <person name="Xiang Y."/>
            <person name="Huang Y."/>
            <person name="Xiong L."/>
        </authorList>
    </citation>
    <scope>INDUCTION</scope>
</reference>
<sequence>MARRAREEEADQVERKLVLGRYELGRLLGQGTFAKVYYGRDLRSGESVAIKVIDKARLRRTEGMVEQLRREISIMRMVRHPNVVGIREVLASRARVFVVMEYARGGELFAKVARGRLTEEHARRYFQQLVAAVGFCHGRGVAHRDLKPENLLLDEEGRLKVTDFGLAALPEQLRQDGLLHTQCGTPAYVAPEVLRKRGYDGARADLWSCGVVLYVLLCGFLPFQHENYAKMYQKIFKAEYQVPPWVSGDARRLIVRLLVVDPAKRISIPEIMRTPWFKKGFVPPVPTSPVSPKKWEEDDVLLDGGDSGAMSPRTCNAFQLISSMSSGFDLSGMFESEQKAATVFTSRAPAATVIQKLEAVGRSLGYSATRGKGWKLRLEATADGANGRLAVTVEALEVAADVAVVEFAHDAGDELEFNKFCAVDVRPGLADIVWAWQGDRPAAPDVAAATVECSPA</sequence>
<proteinExistence type="evidence at transcript level"/>
<name>CIPKG_ORYSJ</name>
<accession>Q6ERS4</accession>
<accession>B7E604</accession>
<accession>Q0J1R5</accession>
<feature type="chain" id="PRO_0000338374" description="CBL-interacting protein kinase 16">
    <location>
        <begin position="1"/>
        <end position="456"/>
    </location>
</feature>
<feature type="domain" description="Protein kinase" evidence="2">
    <location>
        <begin position="22"/>
        <end position="277"/>
    </location>
</feature>
<feature type="domain" description="NAF" evidence="3">
    <location>
        <begin position="309"/>
        <end position="335"/>
    </location>
</feature>
<feature type="region of interest" description="Activation loop" evidence="1">
    <location>
        <begin position="163"/>
        <end position="192"/>
    </location>
</feature>
<feature type="region of interest" description="PPI" evidence="1">
    <location>
        <begin position="339"/>
        <end position="368"/>
    </location>
</feature>
<feature type="active site" description="Proton acceptor" evidence="2 4">
    <location>
        <position position="145"/>
    </location>
</feature>
<feature type="binding site" evidence="2">
    <location>
        <begin position="28"/>
        <end position="36"/>
    </location>
    <ligand>
        <name>ATP</name>
        <dbReference type="ChEBI" id="CHEBI:30616"/>
    </ligand>
</feature>
<feature type="binding site" evidence="2">
    <location>
        <position position="51"/>
    </location>
    <ligand>
        <name>ATP</name>
        <dbReference type="ChEBI" id="CHEBI:30616"/>
    </ligand>
</feature>
<organism>
    <name type="scientific">Oryza sativa subsp. japonica</name>
    <name type="common">Rice</name>
    <dbReference type="NCBI Taxonomy" id="39947"/>
    <lineage>
        <taxon>Eukaryota</taxon>
        <taxon>Viridiplantae</taxon>
        <taxon>Streptophyta</taxon>
        <taxon>Embryophyta</taxon>
        <taxon>Tracheophyta</taxon>
        <taxon>Spermatophyta</taxon>
        <taxon>Magnoliopsida</taxon>
        <taxon>Liliopsida</taxon>
        <taxon>Poales</taxon>
        <taxon>Poaceae</taxon>
        <taxon>BOP clade</taxon>
        <taxon>Oryzoideae</taxon>
        <taxon>Oryzeae</taxon>
        <taxon>Oryzinae</taxon>
        <taxon>Oryza</taxon>
        <taxon>Oryza sativa</taxon>
    </lineage>
</organism>
<keyword id="KW-0067">ATP-binding</keyword>
<keyword id="KW-0418">Kinase</keyword>
<keyword id="KW-0464">Manganese</keyword>
<keyword id="KW-0547">Nucleotide-binding</keyword>
<keyword id="KW-1185">Reference proteome</keyword>
<keyword id="KW-0723">Serine/threonine-protein kinase</keyword>
<keyword id="KW-0808">Transferase</keyword>